<evidence type="ECO:0000250" key="1">
    <source>
        <dbReference type="UniProtKB" id="Q9SHI4"/>
    </source>
</evidence>
<evidence type="ECO:0000255" key="2"/>
<evidence type="ECO:0000255" key="3">
    <source>
        <dbReference type="PROSITE-ProRule" id="PRU00498"/>
    </source>
</evidence>
<evidence type="ECO:0000269" key="4">
    <source>
    </source>
</evidence>
<evidence type="ECO:0000303" key="5">
    <source>
    </source>
</evidence>
<evidence type="ECO:0000305" key="6"/>
<evidence type="ECO:0000312" key="7">
    <source>
        <dbReference type="Araport" id="AT1G17240"/>
    </source>
</evidence>
<evidence type="ECO:0000312" key="8">
    <source>
        <dbReference type="EMBL" id="AAD50026.1"/>
    </source>
</evidence>
<protein>
    <recommendedName>
        <fullName evidence="5">Receptor-like protein 2</fullName>
        <shortName evidence="5">AtRLP2</shortName>
    </recommendedName>
</protein>
<sequence length="729" mass="80576">MRSKAKGLVRPLITKPVQPLSSHMHLFLLCILFLSALFLTLSEAVCNLQDRESLIWFSGNVSSSVSPLNWNLSIDCCSWEGITCDDSSDSHVTVISLPSRGLSGTLASSVQNIHRLSRLDLSYNRLSGPLPPGFFSTLDQLMILNLSYNSFNGELPLEQAFGNESNRFFSIQTLDLSSNLLEGEILRSSVYLQGTINLISFNVSNNSFTGPIPSFMCRSSPQLSKLDFSYNDFSGHISQELGRCLRLTVLQAGFNNLSGVIPSEIYNLSELEQLFLPANQLTGKIDNNITRLRKLTSLALYSNHLEGEIPMDIGNLSSLRSLQLHINNINGTVPLSLANCTKLVKLNLRVNQLGGGLTELEFSQLQSLKVLDLGNNSFTGALPDKIFSCKSLTAIRFAGNKLTGEISPQVLELESLSFMGLSDNKLTNITGALSILQGCRKLSTLILAKNFYDETVPSKEDFLSPDGFPKLRIFGVGACRLRGEIPAWLINLNKVEVMDLSMNRFVGSIPGWLGTLPDLFYLDLSDNLLTGELPKELFQLRALMSQKITENNYLELPIFLNPNNVTTNQQYNKLYSFPPTIYIRRNNLTGSIPVEVGQLKVLHILELLGNNLSGSIPDELSNLTNLERLDLSNNNLSGSIPWSLTNLNFLSYFNVANNSLEGPIPSEGQFDTFPKANFEGNPLLCGGVLLTSCKPTRAKENDELNRTFLMGIAIGYFLSFVSILVVRAW</sequence>
<accession>Q9SHI3</accession>
<proteinExistence type="evidence at transcript level"/>
<dbReference type="EMBL" id="AC007651">
    <property type="protein sequence ID" value="AAD50026.1"/>
    <property type="molecule type" value="Genomic_DNA"/>
</dbReference>
<dbReference type="EMBL" id="CP002684">
    <property type="protein sequence ID" value="AEE29563.1"/>
    <property type="molecule type" value="Genomic_DNA"/>
</dbReference>
<dbReference type="EMBL" id="AI998499">
    <property type="status" value="NOT_ANNOTATED_CDS"/>
    <property type="molecule type" value="mRNA"/>
</dbReference>
<dbReference type="PIR" id="F86308">
    <property type="entry name" value="F86308"/>
</dbReference>
<dbReference type="RefSeq" id="NP_173167.1">
    <property type="nucleotide sequence ID" value="NM_101585.3"/>
</dbReference>
<dbReference type="SMR" id="Q9SHI3"/>
<dbReference type="BioGRID" id="23535">
    <property type="interactions" value="1"/>
</dbReference>
<dbReference type="IntAct" id="Q9SHI3">
    <property type="interactions" value="1"/>
</dbReference>
<dbReference type="STRING" id="3702.Q9SHI3"/>
<dbReference type="GlyCosmos" id="Q9SHI3">
    <property type="glycosylation" value="21 sites, No reported glycans"/>
</dbReference>
<dbReference type="GlyGen" id="Q9SHI3">
    <property type="glycosylation" value="21 sites"/>
</dbReference>
<dbReference type="iPTMnet" id="Q9SHI3"/>
<dbReference type="PaxDb" id="3702-AT1G17240.1"/>
<dbReference type="EnsemblPlants" id="AT1G17240.1">
    <property type="protein sequence ID" value="AT1G17240.1"/>
    <property type="gene ID" value="AT1G17240"/>
</dbReference>
<dbReference type="GeneID" id="838295"/>
<dbReference type="Gramene" id="AT1G17240.1">
    <property type="protein sequence ID" value="AT1G17240.1"/>
    <property type="gene ID" value="AT1G17240"/>
</dbReference>
<dbReference type="KEGG" id="ath:AT1G17240"/>
<dbReference type="Araport" id="AT1G17240"/>
<dbReference type="TAIR" id="AT1G17240">
    <property type="gene designation" value="RLP2"/>
</dbReference>
<dbReference type="eggNOG" id="KOG0619">
    <property type="taxonomic scope" value="Eukaryota"/>
</dbReference>
<dbReference type="HOGENOM" id="CLU_000288_22_9_1"/>
<dbReference type="InParanoid" id="Q9SHI3"/>
<dbReference type="PhylomeDB" id="Q9SHI3"/>
<dbReference type="PRO" id="PR:Q9SHI3"/>
<dbReference type="Proteomes" id="UP000006548">
    <property type="component" value="Chromosome 1"/>
</dbReference>
<dbReference type="ExpressionAtlas" id="Q9SHI3">
    <property type="expression patterns" value="baseline and differential"/>
</dbReference>
<dbReference type="GO" id="GO:0005886">
    <property type="term" value="C:plasma membrane"/>
    <property type="evidence" value="ECO:0007669"/>
    <property type="project" value="UniProtKB-SubCell"/>
</dbReference>
<dbReference type="GO" id="GO:0010073">
    <property type="term" value="P:meristem maintenance"/>
    <property type="evidence" value="ECO:0000315"/>
    <property type="project" value="UniProtKB"/>
</dbReference>
<dbReference type="FunFam" id="3.80.10.10:FF:000403">
    <property type="entry name" value="Receptor-like protein 2"/>
    <property type="match status" value="1"/>
</dbReference>
<dbReference type="FunFam" id="3.80.10.10:FF:000530">
    <property type="entry name" value="Receptor-like protein 2"/>
    <property type="match status" value="1"/>
</dbReference>
<dbReference type="FunFam" id="3.80.10.10:FF:000213">
    <property type="entry name" value="Tyrosine-sulfated glycopeptide receptor 1"/>
    <property type="match status" value="1"/>
</dbReference>
<dbReference type="Gene3D" id="3.80.10.10">
    <property type="entry name" value="Ribonuclease Inhibitor"/>
    <property type="match status" value="4"/>
</dbReference>
<dbReference type="InterPro" id="IPR001611">
    <property type="entry name" value="Leu-rich_rpt"/>
</dbReference>
<dbReference type="InterPro" id="IPR003591">
    <property type="entry name" value="Leu-rich_rpt_typical-subtyp"/>
</dbReference>
<dbReference type="InterPro" id="IPR032675">
    <property type="entry name" value="LRR_dom_sf"/>
</dbReference>
<dbReference type="InterPro" id="IPR013210">
    <property type="entry name" value="LRR_N_plant-typ"/>
</dbReference>
<dbReference type="InterPro" id="IPR050647">
    <property type="entry name" value="Plant_LRR-RLKs"/>
</dbReference>
<dbReference type="PANTHER" id="PTHR48056:SF57">
    <property type="entry name" value="LEUCINE-RICH REPEAT-CONTAINING N-TERMINAL PLANT-TYPE DOMAIN-CONTAINING PROTEIN"/>
    <property type="match status" value="1"/>
</dbReference>
<dbReference type="PANTHER" id="PTHR48056">
    <property type="entry name" value="LRR RECEPTOR-LIKE SERINE/THREONINE-PROTEIN KINASE-RELATED"/>
    <property type="match status" value="1"/>
</dbReference>
<dbReference type="Pfam" id="PF00560">
    <property type="entry name" value="LRR_1"/>
    <property type="match status" value="8"/>
</dbReference>
<dbReference type="Pfam" id="PF08263">
    <property type="entry name" value="LRRNT_2"/>
    <property type="match status" value="1"/>
</dbReference>
<dbReference type="PRINTS" id="PR00019">
    <property type="entry name" value="LEURICHRPT"/>
</dbReference>
<dbReference type="SMART" id="SM00369">
    <property type="entry name" value="LRR_TYP"/>
    <property type="match status" value="7"/>
</dbReference>
<dbReference type="SUPFAM" id="SSF52058">
    <property type="entry name" value="L domain-like"/>
    <property type="match status" value="2"/>
</dbReference>
<dbReference type="PROSITE" id="PS51450">
    <property type="entry name" value="LRR"/>
    <property type="match status" value="12"/>
</dbReference>
<organism>
    <name type="scientific">Arabidopsis thaliana</name>
    <name type="common">Mouse-ear cress</name>
    <dbReference type="NCBI Taxonomy" id="3702"/>
    <lineage>
        <taxon>Eukaryota</taxon>
        <taxon>Viridiplantae</taxon>
        <taxon>Streptophyta</taxon>
        <taxon>Embryophyta</taxon>
        <taxon>Tracheophyta</taxon>
        <taxon>Spermatophyta</taxon>
        <taxon>Magnoliopsida</taxon>
        <taxon>eudicotyledons</taxon>
        <taxon>Gunneridae</taxon>
        <taxon>Pentapetalae</taxon>
        <taxon>rosids</taxon>
        <taxon>malvids</taxon>
        <taxon>Brassicales</taxon>
        <taxon>Brassicaceae</taxon>
        <taxon>Camelineae</taxon>
        <taxon>Arabidopsis</taxon>
    </lineage>
</organism>
<keyword id="KW-1003">Cell membrane</keyword>
<keyword id="KW-0325">Glycoprotein</keyword>
<keyword id="KW-0433">Leucine-rich repeat</keyword>
<keyword id="KW-0472">Membrane</keyword>
<keyword id="KW-1185">Reference proteome</keyword>
<keyword id="KW-0677">Repeat</keyword>
<keyword id="KW-0732">Signal</keyword>
<keyword id="KW-0812">Transmembrane</keyword>
<keyword id="KW-1133">Transmembrane helix</keyword>
<reference key="1">
    <citation type="journal article" date="2000" name="Nature">
        <title>Sequence and analysis of chromosome 1 of the plant Arabidopsis thaliana.</title>
        <authorList>
            <person name="Theologis A."/>
            <person name="Ecker J.R."/>
            <person name="Palm C.J."/>
            <person name="Federspiel N.A."/>
            <person name="Kaul S."/>
            <person name="White O."/>
            <person name="Alonso J."/>
            <person name="Altafi H."/>
            <person name="Araujo R."/>
            <person name="Bowman C.L."/>
            <person name="Brooks S.Y."/>
            <person name="Buehler E."/>
            <person name="Chan A."/>
            <person name="Chao Q."/>
            <person name="Chen H."/>
            <person name="Cheuk R.F."/>
            <person name="Chin C.W."/>
            <person name="Chung M.K."/>
            <person name="Conn L."/>
            <person name="Conway A.B."/>
            <person name="Conway A.R."/>
            <person name="Creasy T.H."/>
            <person name="Dewar K."/>
            <person name="Dunn P."/>
            <person name="Etgu P."/>
            <person name="Feldblyum T.V."/>
            <person name="Feng J.-D."/>
            <person name="Fong B."/>
            <person name="Fujii C.Y."/>
            <person name="Gill J.E."/>
            <person name="Goldsmith A.D."/>
            <person name="Haas B."/>
            <person name="Hansen N.F."/>
            <person name="Hughes B."/>
            <person name="Huizar L."/>
            <person name="Hunter J.L."/>
            <person name="Jenkins J."/>
            <person name="Johnson-Hopson C."/>
            <person name="Khan S."/>
            <person name="Khaykin E."/>
            <person name="Kim C.J."/>
            <person name="Koo H.L."/>
            <person name="Kremenetskaia I."/>
            <person name="Kurtz D.B."/>
            <person name="Kwan A."/>
            <person name="Lam B."/>
            <person name="Langin-Hooper S."/>
            <person name="Lee A."/>
            <person name="Lee J.M."/>
            <person name="Lenz C.A."/>
            <person name="Li J.H."/>
            <person name="Li Y.-P."/>
            <person name="Lin X."/>
            <person name="Liu S.X."/>
            <person name="Liu Z.A."/>
            <person name="Luros J.S."/>
            <person name="Maiti R."/>
            <person name="Marziali A."/>
            <person name="Militscher J."/>
            <person name="Miranda M."/>
            <person name="Nguyen M."/>
            <person name="Nierman W.C."/>
            <person name="Osborne B.I."/>
            <person name="Pai G."/>
            <person name="Peterson J."/>
            <person name="Pham P.K."/>
            <person name="Rizzo M."/>
            <person name="Rooney T."/>
            <person name="Rowley D."/>
            <person name="Sakano H."/>
            <person name="Salzberg S.L."/>
            <person name="Schwartz J.R."/>
            <person name="Shinn P."/>
            <person name="Southwick A.M."/>
            <person name="Sun H."/>
            <person name="Tallon L.J."/>
            <person name="Tambunga G."/>
            <person name="Toriumi M.J."/>
            <person name="Town C.D."/>
            <person name="Utterback T."/>
            <person name="Van Aken S."/>
            <person name="Vaysberg M."/>
            <person name="Vysotskaia V.S."/>
            <person name="Walker M."/>
            <person name="Wu D."/>
            <person name="Yu G."/>
            <person name="Fraser C.M."/>
            <person name="Venter J.C."/>
            <person name="Davis R.W."/>
        </authorList>
    </citation>
    <scope>NUCLEOTIDE SEQUENCE [LARGE SCALE GENOMIC DNA]</scope>
    <source>
        <strain>cv. Columbia</strain>
    </source>
</reference>
<reference key="2">
    <citation type="journal article" date="2017" name="Plant J.">
        <title>Araport11: a complete reannotation of the Arabidopsis thaliana reference genome.</title>
        <authorList>
            <person name="Cheng C.Y."/>
            <person name="Krishnakumar V."/>
            <person name="Chan A.P."/>
            <person name="Thibaud-Nissen F."/>
            <person name="Schobel S."/>
            <person name="Town C.D."/>
        </authorList>
    </citation>
    <scope>GENOME REANNOTATION</scope>
    <source>
        <strain>cv. Columbia</strain>
    </source>
</reference>
<reference key="3">
    <citation type="journal article" date="2005" name="Plant Physiol.">
        <title>Phylogenomic analysis of the receptor-like proteins of rice and Arabidopsis.</title>
        <authorList>
            <person name="Fritz-Laylin L.K."/>
            <person name="Krishnamurthy N."/>
            <person name="Toer M."/>
            <person name="Sjoelander K.V."/>
            <person name="Jones J.D."/>
        </authorList>
    </citation>
    <scope>GENE FAMILY</scope>
</reference>
<reference key="4">
    <citation type="journal article" date="2008" name="Plant Physiol.">
        <title>A genome-wide functional investigation into the roles of receptor-like proteins in Arabidopsis.</title>
        <authorList>
            <person name="Wang G."/>
            <person name="Ellendorff U."/>
            <person name="Kemp B."/>
            <person name="Mansfield J.W."/>
            <person name="Forsyth A."/>
            <person name="Mitchell K."/>
            <person name="Bastas K."/>
            <person name="Liu C.-M."/>
            <person name="Woods-Toer A."/>
            <person name="Zipfel C."/>
            <person name="de Wit P.J.G.M."/>
            <person name="Jones J.D.G."/>
            <person name="Toer M."/>
            <person name="Thomma B.P.H.J."/>
        </authorList>
    </citation>
    <scope>GENE FAMILY</scope>
    <scope>NOMENCLATURE</scope>
</reference>
<reference key="5">
    <citation type="journal article" date="2010" name="Plant Physiol.">
        <title>Functional analyses of the CLAVATA2-like proteins and their domains that contribute to CLAVATA2 specificity.</title>
        <authorList>
            <person name="Wang G."/>
            <person name="Long Y."/>
            <person name="Thomma B.P.H.J."/>
            <person name="de Wit P.J.G.M."/>
            <person name="Angenent G.C."/>
            <person name="Fiers M."/>
        </authorList>
    </citation>
    <scope>FUNCTION</scope>
</reference>
<comment type="function">
    <text evidence="4">Involved in the perception of CLV3 and CLV3-like peptides, that act as extracellular signals regulating meristems maintenance.</text>
</comment>
<comment type="subcellular location">
    <subcellularLocation>
        <location evidence="6">Cell membrane</location>
        <topology evidence="6">Single-pass type I membrane protein</topology>
    </subcellularLocation>
</comment>
<comment type="similarity">
    <text evidence="6">Belongs to the RLP family.</text>
</comment>
<gene>
    <name evidence="5" type="primary">RLP2</name>
    <name evidence="7" type="ordered locus">At1g17240</name>
    <name evidence="8" type="ORF">F20D23.6</name>
</gene>
<feature type="signal peptide" evidence="2">
    <location>
        <begin position="1"/>
        <end position="44"/>
    </location>
</feature>
<feature type="chain" id="PRO_0000401213" description="Receptor-like protein 2">
    <location>
        <begin position="45"/>
        <end position="729"/>
    </location>
</feature>
<feature type="topological domain" description="Extracellular" evidence="2">
    <location>
        <begin position="45"/>
        <end position="707"/>
    </location>
</feature>
<feature type="transmembrane region" description="Helical" evidence="2">
    <location>
        <begin position="708"/>
        <end position="728"/>
    </location>
</feature>
<feature type="topological domain" description="Cytoplasmic" evidence="2">
    <location>
        <position position="729"/>
    </location>
</feature>
<feature type="repeat" description="LRR 1" evidence="2">
    <location>
        <begin position="89"/>
        <end position="113"/>
    </location>
</feature>
<feature type="repeat" description="LRR 2" evidence="2">
    <location>
        <begin position="114"/>
        <end position="137"/>
    </location>
</feature>
<feature type="repeat" description="LRR 3" evidence="2">
    <location>
        <begin position="139"/>
        <end position="163"/>
    </location>
</feature>
<feature type="repeat" description="LRR 4" evidence="2">
    <location>
        <begin position="168"/>
        <end position="193"/>
    </location>
</feature>
<feature type="repeat" description="LRR 5" evidence="2">
    <location>
        <begin position="195"/>
        <end position="219"/>
    </location>
</feature>
<feature type="repeat" description="LRR 6" evidence="2">
    <location>
        <begin position="220"/>
        <end position="244"/>
    </location>
</feature>
<feature type="repeat" description="LRR 7" evidence="2">
    <location>
        <begin position="245"/>
        <end position="268"/>
    </location>
</feature>
<feature type="repeat" description="LRR 8" evidence="2">
    <location>
        <begin position="269"/>
        <end position="292"/>
    </location>
</feature>
<feature type="repeat" description="LRR 9" evidence="2">
    <location>
        <begin position="293"/>
        <end position="316"/>
    </location>
</feature>
<feature type="repeat" description="LRR 10" evidence="2">
    <location>
        <begin position="317"/>
        <end position="340"/>
    </location>
</feature>
<feature type="repeat" description="LRR 11" evidence="2">
    <location>
        <begin position="342"/>
        <end position="364"/>
    </location>
</feature>
<feature type="repeat" description="LRR 12" evidence="2">
    <location>
        <begin position="365"/>
        <end position="389"/>
    </location>
</feature>
<feature type="repeat" description="LRR 13" evidence="2">
    <location>
        <begin position="391"/>
        <end position="413"/>
    </location>
</feature>
<feature type="repeat" description="LRR 14" evidence="2">
    <location>
        <begin position="414"/>
        <end position="437"/>
    </location>
</feature>
<feature type="repeat" description="LRR 15" evidence="2">
    <location>
        <begin position="439"/>
        <end position="464"/>
    </location>
</feature>
<feature type="repeat" description="LRR 16" evidence="2">
    <location>
        <begin position="468"/>
        <end position="492"/>
    </location>
</feature>
<feature type="repeat" description="LRR 17" evidence="2">
    <location>
        <begin position="493"/>
        <end position="515"/>
    </location>
</feature>
<feature type="repeat" description="LRR 18" evidence="2">
    <location>
        <begin position="516"/>
        <end position="540"/>
    </location>
</feature>
<feature type="repeat" description="LRR 19" evidence="2">
    <location>
        <begin position="542"/>
        <end position="560"/>
    </location>
</feature>
<feature type="repeat" description="LRR 20" evidence="2">
    <location>
        <begin position="561"/>
        <end position="584"/>
    </location>
</feature>
<feature type="repeat" description="LRR 21" evidence="2">
    <location>
        <begin position="599"/>
        <end position="623"/>
    </location>
</feature>
<feature type="repeat" description="LRR 22" evidence="2">
    <location>
        <begin position="624"/>
        <end position="647"/>
    </location>
</feature>
<feature type="repeat" description="LRR 23" evidence="2">
    <location>
        <begin position="649"/>
        <end position="672"/>
    </location>
</feature>
<feature type="region of interest" description="N-cap" evidence="1">
    <location>
        <begin position="45"/>
        <end position="82"/>
    </location>
</feature>
<feature type="region of interest" description="C-cap/acidic domain" evidence="1">
    <location>
        <begin position="690"/>
        <end position="707"/>
    </location>
</feature>
<feature type="glycosylation site" description="N-linked (GlcNAc...) asparagine" evidence="3">
    <location>
        <position position="60"/>
    </location>
</feature>
<feature type="glycosylation site" description="N-linked (GlcNAc...) asparagine" evidence="3">
    <location>
        <position position="71"/>
    </location>
</feature>
<feature type="glycosylation site" description="N-linked (GlcNAc...) asparagine" evidence="3">
    <location>
        <position position="145"/>
    </location>
</feature>
<feature type="glycosylation site" description="N-linked (GlcNAc...) asparagine" evidence="3">
    <location>
        <position position="163"/>
    </location>
</feature>
<feature type="glycosylation site" description="N-linked (GlcNAc...) asparagine" evidence="3">
    <location>
        <position position="202"/>
    </location>
</feature>
<feature type="glycosylation site" description="N-linked (GlcNAc...) asparagine" evidence="3">
    <location>
        <position position="205"/>
    </location>
</feature>
<feature type="glycosylation site" description="N-linked (GlcNAc...) asparagine" evidence="3">
    <location>
        <position position="256"/>
    </location>
</feature>
<feature type="glycosylation site" description="N-linked (GlcNAc...) asparagine" evidence="3">
    <location>
        <position position="267"/>
    </location>
</feature>
<feature type="glycosylation site" description="N-linked (GlcNAc...) asparagine" evidence="3">
    <location>
        <position position="288"/>
    </location>
</feature>
<feature type="glycosylation site" description="N-linked (GlcNAc...) asparagine" evidence="3">
    <location>
        <position position="315"/>
    </location>
</feature>
<feature type="glycosylation site" description="N-linked (GlcNAc...) asparagine" evidence="3">
    <location>
        <position position="330"/>
    </location>
</feature>
<feature type="glycosylation site" description="N-linked (GlcNAc...) asparagine" evidence="3">
    <location>
        <position position="339"/>
    </location>
</feature>
<feature type="glycosylation site" description="N-linked (GlcNAc...) asparagine" evidence="3">
    <location>
        <position position="375"/>
    </location>
</feature>
<feature type="glycosylation site" description="N-linked (GlcNAc...) asparagine" evidence="3">
    <location>
        <position position="428"/>
    </location>
</feature>
<feature type="glycosylation site" description="N-linked (GlcNAc...) asparagine" evidence="3">
    <location>
        <position position="564"/>
    </location>
</feature>
<feature type="glycosylation site" description="N-linked (GlcNAc...) asparagine" evidence="3">
    <location>
        <position position="587"/>
    </location>
</feature>
<feature type="glycosylation site" description="N-linked (GlcNAc...) asparagine" evidence="3">
    <location>
        <position position="611"/>
    </location>
</feature>
<feature type="glycosylation site" description="N-linked (GlcNAc...) asparagine" evidence="3">
    <location>
        <position position="622"/>
    </location>
</feature>
<feature type="glycosylation site" description="N-linked (GlcNAc...) asparagine" evidence="3">
    <location>
        <position position="635"/>
    </location>
</feature>
<feature type="glycosylation site" description="N-linked (GlcNAc...) asparagine" evidence="3">
    <location>
        <position position="657"/>
    </location>
</feature>
<feature type="glycosylation site" description="N-linked (GlcNAc...) asparagine" evidence="3">
    <location>
        <position position="705"/>
    </location>
</feature>
<name>RLP2_ARATH</name>